<feature type="chain" id="PRO_1000065019" description="UPF0291 protein BPUM_1689">
    <location>
        <begin position="1"/>
        <end position="76"/>
    </location>
</feature>
<feature type="region of interest" description="Disordered" evidence="2">
    <location>
        <begin position="1"/>
        <end position="31"/>
    </location>
</feature>
<feature type="region of interest" description="Disordered" evidence="2">
    <location>
        <begin position="56"/>
        <end position="76"/>
    </location>
</feature>
<feature type="compositionally biased region" description="Basic and acidic residues" evidence="2">
    <location>
        <begin position="12"/>
        <end position="31"/>
    </location>
</feature>
<feature type="compositionally biased region" description="Basic and acidic residues" evidence="2">
    <location>
        <begin position="63"/>
        <end position="76"/>
    </location>
</feature>
<name>Y1689_BACP2</name>
<gene>
    <name type="ordered locus">BPUM_1689</name>
</gene>
<accession>A8FDQ0</accession>
<proteinExistence type="inferred from homology"/>
<protein>
    <recommendedName>
        <fullName evidence="1">UPF0291 protein BPUM_1689</fullName>
    </recommendedName>
</protein>
<comment type="subcellular location">
    <subcellularLocation>
        <location evidence="1">Cytoplasm</location>
    </subcellularLocation>
</comment>
<comment type="similarity">
    <text evidence="1">Belongs to the UPF0291 family.</text>
</comment>
<organism>
    <name type="scientific">Bacillus pumilus (strain SAFR-032)</name>
    <dbReference type="NCBI Taxonomy" id="315750"/>
    <lineage>
        <taxon>Bacteria</taxon>
        <taxon>Bacillati</taxon>
        <taxon>Bacillota</taxon>
        <taxon>Bacilli</taxon>
        <taxon>Bacillales</taxon>
        <taxon>Bacillaceae</taxon>
        <taxon>Bacillus</taxon>
    </lineage>
</organism>
<dbReference type="EMBL" id="CP000813">
    <property type="protein sequence ID" value="ABV62367.1"/>
    <property type="molecule type" value="Genomic_DNA"/>
</dbReference>
<dbReference type="RefSeq" id="WP_003211509.1">
    <property type="nucleotide sequence ID" value="NZ_VEIS01000012.1"/>
</dbReference>
<dbReference type="SMR" id="A8FDQ0"/>
<dbReference type="STRING" id="315750.BPUM_1689"/>
<dbReference type="GeneID" id="5620950"/>
<dbReference type="KEGG" id="bpu:BPUM_1689"/>
<dbReference type="eggNOG" id="COG4224">
    <property type="taxonomic scope" value="Bacteria"/>
</dbReference>
<dbReference type="HOGENOM" id="CLU_173137_0_2_9"/>
<dbReference type="OrthoDB" id="390105at2"/>
<dbReference type="Proteomes" id="UP000001355">
    <property type="component" value="Chromosome"/>
</dbReference>
<dbReference type="GO" id="GO:0005737">
    <property type="term" value="C:cytoplasm"/>
    <property type="evidence" value="ECO:0007669"/>
    <property type="project" value="UniProtKB-SubCell"/>
</dbReference>
<dbReference type="Gene3D" id="1.10.287.540">
    <property type="entry name" value="Helix hairpin bin"/>
    <property type="match status" value="1"/>
</dbReference>
<dbReference type="HAMAP" id="MF_01103">
    <property type="entry name" value="UPF0291"/>
    <property type="match status" value="1"/>
</dbReference>
<dbReference type="InterPro" id="IPR009242">
    <property type="entry name" value="DUF896"/>
</dbReference>
<dbReference type="PANTHER" id="PTHR37300">
    <property type="entry name" value="UPF0291 PROTEIN CBO2609/CLC_2481"/>
    <property type="match status" value="1"/>
</dbReference>
<dbReference type="PANTHER" id="PTHR37300:SF1">
    <property type="entry name" value="UPF0291 PROTEIN YNZC"/>
    <property type="match status" value="1"/>
</dbReference>
<dbReference type="Pfam" id="PF05979">
    <property type="entry name" value="DUF896"/>
    <property type="match status" value="1"/>
</dbReference>
<dbReference type="SUPFAM" id="SSF158221">
    <property type="entry name" value="YnzC-like"/>
    <property type="match status" value="1"/>
</dbReference>
<evidence type="ECO:0000255" key="1">
    <source>
        <dbReference type="HAMAP-Rule" id="MF_01103"/>
    </source>
</evidence>
<evidence type="ECO:0000256" key="2">
    <source>
        <dbReference type="SAM" id="MobiDB-lite"/>
    </source>
</evidence>
<sequence>MISKNQLARINELSKKSKETGLSDAEKTEQKQLREEYLKAFRSSMKNTLKTVKIVDPEGNDVTPEKLKRERDQNLH</sequence>
<reference key="1">
    <citation type="journal article" date="2007" name="PLoS ONE">
        <title>Paradoxical DNA repair and peroxide resistance gene conservation in Bacillus pumilus SAFR-032.</title>
        <authorList>
            <person name="Gioia J."/>
            <person name="Yerrapragada S."/>
            <person name="Qin X."/>
            <person name="Jiang H."/>
            <person name="Igboeli O.C."/>
            <person name="Muzny D."/>
            <person name="Dugan-Rocha S."/>
            <person name="Ding Y."/>
            <person name="Hawes A."/>
            <person name="Liu W."/>
            <person name="Perez L."/>
            <person name="Kovar C."/>
            <person name="Dinh H."/>
            <person name="Lee S."/>
            <person name="Nazareth L."/>
            <person name="Blyth P."/>
            <person name="Holder M."/>
            <person name="Buhay C."/>
            <person name="Tirumalai M.R."/>
            <person name="Liu Y."/>
            <person name="Dasgupta I."/>
            <person name="Bokhetache L."/>
            <person name="Fujita M."/>
            <person name="Karouia F."/>
            <person name="Eswara Moorthy P."/>
            <person name="Siefert J."/>
            <person name="Uzman A."/>
            <person name="Buzumbo P."/>
            <person name="Verma A."/>
            <person name="Zwiya H."/>
            <person name="McWilliams B.D."/>
            <person name="Olowu A."/>
            <person name="Clinkenbeard K.D."/>
            <person name="Newcombe D."/>
            <person name="Golebiewski L."/>
            <person name="Petrosino J.F."/>
            <person name="Nicholson W.L."/>
            <person name="Fox G.E."/>
            <person name="Venkateswaran K."/>
            <person name="Highlander S.K."/>
            <person name="Weinstock G.M."/>
        </authorList>
    </citation>
    <scope>NUCLEOTIDE SEQUENCE [LARGE SCALE GENOMIC DNA]</scope>
    <source>
        <strain>SAFR-032</strain>
    </source>
</reference>
<keyword id="KW-0963">Cytoplasm</keyword>